<dbReference type="EMBL" id="AF156880">
    <property type="protein sequence ID" value="AAD39006.1"/>
    <property type="molecule type" value="mRNA"/>
</dbReference>
<dbReference type="EMBL" id="AE013599">
    <property type="protein sequence ID" value="AAF58695.1"/>
    <property type="molecule type" value="Genomic_DNA"/>
</dbReference>
<dbReference type="RefSeq" id="NP_523689.1">
    <property type="nucleotide sequence ID" value="NM_078965.3"/>
</dbReference>
<dbReference type="SMR" id="P81921"/>
<dbReference type="FunCoup" id="P81921">
    <property type="interactions" value="10"/>
</dbReference>
<dbReference type="STRING" id="7227.FBpp0087212"/>
<dbReference type="PaxDb" id="7227-FBpp0087212"/>
<dbReference type="EnsemblMetazoa" id="FBtr0088111">
    <property type="protein sequence ID" value="FBpp0087212"/>
    <property type="gene ID" value="FBgn0026386"/>
</dbReference>
<dbReference type="GeneID" id="36187"/>
<dbReference type="KEGG" id="dme:Dmel_CG13225"/>
<dbReference type="AGR" id="FB:FBgn0026386"/>
<dbReference type="CTD" id="36187"/>
<dbReference type="FlyBase" id="FBgn0026386">
    <property type="gene designation" value="Or47a"/>
</dbReference>
<dbReference type="VEuPathDB" id="VectorBase:FBgn0026386"/>
<dbReference type="eggNOG" id="ENOG502SSPN">
    <property type="taxonomic scope" value="Eukaryota"/>
</dbReference>
<dbReference type="GeneTree" id="ENSGT00940000168837"/>
<dbReference type="HOGENOM" id="CLU_033399_7_1_1"/>
<dbReference type="InParanoid" id="P81921"/>
<dbReference type="OMA" id="PWHESLG"/>
<dbReference type="OrthoDB" id="8185860at2759"/>
<dbReference type="PhylomeDB" id="P81921"/>
<dbReference type="BioGRID-ORCS" id="36187">
    <property type="hits" value="0 hits in 1 CRISPR screen"/>
</dbReference>
<dbReference type="GenomeRNAi" id="36187"/>
<dbReference type="PRO" id="PR:P81921"/>
<dbReference type="Proteomes" id="UP000000803">
    <property type="component" value="Chromosome 2R"/>
</dbReference>
<dbReference type="Bgee" id="FBgn0026386">
    <property type="expression patterns" value="Expressed in antennal basiconic sensillum ab5 (Drosophila) and 5 other cell types or tissues"/>
</dbReference>
<dbReference type="ExpressionAtlas" id="P81921">
    <property type="expression patterns" value="differential"/>
</dbReference>
<dbReference type="GO" id="GO:0030425">
    <property type="term" value="C:dendrite"/>
    <property type="evidence" value="ECO:0000314"/>
    <property type="project" value="FlyBase"/>
</dbReference>
<dbReference type="GO" id="GO:0032590">
    <property type="term" value="C:dendrite membrane"/>
    <property type="evidence" value="ECO:0000250"/>
    <property type="project" value="FlyBase"/>
</dbReference>
<dbReference type="GO" id="GO:0016020">
    <property type="term" value="C:membrane"/>
    <property type="evidence" value="ECO:0000303"/>
    <property type="project" value="UniProtKB"/>
</dbReference>
<dbReference type="GO" id="GO:0005886">
    <property type="term" value="C:plasma membrane"/>
    <property type="evidence" value="ECO:0007005"/>
    <property type="project" value="FlyBase"/>
</dbReference>
<dbReference type="GO" id="GO:0170020">
    <property type="term" value="F:ionotropic olfactory receptor activity"/>
    <property type="evidence" value="ECO:0000314"/>
    <property type="project" value="FlyBase"/>
</dbReference>
<dbReference type="GO" id="GO:0005549">
    <property type="term" value="F:odorant binding"/>
    <property type="evidence" value="ECO:0000250"/>
    <property type="project" value="FlyBase"/>
</dbReference>
<dbReference type="GO" id="GO:0004984">
    <property type="term" value="F:olfactory receptor activity"/>
    <property type="evidence" value="ECO:0000318"/>
    <property type="project" value="GO_Central"/>
</dbReference>
<dbReference type="GO" id="GO:0050911">
    <property type="term" value="P:detection of chemical stimulus involved in sensory perception of smell"/>
    <property type="evidence" value="ECO:0007005"/>
    <property type="project" value="FlyBase"/>
</dbReference>
<dbReference type="GO" id="GO:0007608">
    <property type="term" value="P:sensory perception of smell"/>
    <property type="evidence" value="ECO:0000270"/>
    <property type="project" value="FlyBase"/>
</dbReference>
<dbReference type="GO" id="GO:0007165">
    <property type="term" value="P:signal transduction"/>
    <property type="evidence" value="ECO:0007669"/>
    <property type="project" value="UniProtKB-KW"/>
</dbReference>
<dbReference type="InterPro" id="IPR004117">
    <property type="entry name" value="7tm6_olfct_rcpt"/>
</dbReference>
<dbReference type="PANTHER" id="PTHR21137">
    <property type="entry name" value="ODORANT RECEPTOR"/>
    <property type="match status" value="1"/>
</dbReference>
<dbReference type="PANTHER" id="PTHR21137:SF43">
    <property type="entry name" value="ODORANT RECEPTOR 47A-RELATED"/>
    <property type="match status" value="1"/>
</dbReference>
<dbReference type="Pfam" id="PF02949">
    <property type="entry name" value="7tm_6"/>
    <property type="match status" value="1"/>
</dbReference>
<organism>
    <name type="scientific">Drosophila melanogaster</name>
    <name type="common">Fruit fly</name>
    <dbReference type="NCBI Taxonomy" id="7227"/>
    <lineage>
        <taxon>Eukaryota</taxon>
        <taxon>Metazoa</taxon>
        <taxon>Ecdysozoa</taxon>
        <taxon>Arthropoda</taxon>
        <taxon>Hexapoda</taxon>
        <taxon>Insecta</taxon>
        <taxon>Pterygota</taxon>
        <taxon>Neoptera</taxon>
        <taxon>Endopterygota</taxon>
        <taxon>Diptera</taxon>
        <taxon>Brachycera</taxon>
        <taxon>Muscomorpha</taxon>
        <taxon>Ephydroidea</taxon>
        <taxon>Drosophilidae</taxon>
        <taxon>Drosophila</taxon>
        <taxon>Sophophora</taxon>
    </lineage>
</organism>
<comment type="function">
    <text evidence="5 6 7 8 9 10 11">Odorant receptor which mediates acceptance or avoidance behavior, depending on its substrates. The odorant receptor repertoire encodes a large collection of odor stimuli that vary widely in identity, intensity, and duration. Complexes with Orco to form odorant-sensing units, providing sensitive and prolonged odorant signaling and calcium permeability. They are necessary and sufficient to promote functional reconstitution of odor-evoked signaling in sensory neurons that normally respond only to carbon dioxide. Involved in the behavioral responses to esters. Involved in the behavioral responses to pentyl acetate.</text>
</comment>
<comment type="subunit">
    <text evidence="5 7 8">Interacts with Orco. Complexes exist early in the endomembrane system in olfactory sensory neurons (OSNs), coupling these complexes to the conserved ciliary trafficking pathway.</text>
</comment>
<comment type="subcellular location">
    <subcellularLocation>
        <location evidence="1">Cell membrane</location>
        <topology evidence="1">Multi-pass membrane protein</topology>
    </subcellularLocation>
</comment>
<comment type="tissue specificity">
    <text evidence="3 4 5">Expressed with Orco in 40 olfactory receptor neurons in a broad area across the antenna, including both anterior and posterior faces. This expression pattern matches the distribution of the small sensilla basiconica. Expression in the antenna is observed late in antennal development at 93 hours APF.</text>
</comment>
<comment type="miscellaneous">
    <text>The atypical heteromeric and topological design of the odorant receptors appears to be an insect-specific solution for odor recognition, making the OR/Orco complex an attractive target for the development of highly selective insect repellents to disrupt olfactory-mediated host-seeking behaviors of insect disease vectors. Odor-evoked OR currents are independent of known G-protein-coupled second messenger pathways.</text>
</comment>
<comment type="similarity">
    <text evidence="12">Belongs to the insect chemoreceptor superfamily. Heteromeric odorant receptor channel (TC 1.A.69) family. Or1a subfamily.</text>
</comment>
<accession>P81921</accession>
<accession>Q9U6X8</accession>
<evidence type="ECO:0000250" key="1"/>
<evidence type="ECO:0000255" key="2"/>
<evidence type="ECO:0000269" key="3">
    <source>
    </source>
</evidence>
<evidence type="ECO:0000269" key="4">
    <source>
    </source>
</evidence>
<evidence type="ECO:0000269" key="5">
    <source>
    </source>
</evidence>
<evidence type="ECO:0000269" key="6">
    <source>
    </source>
</evidence>
<evidence type="ECO:0000269" key="7">
    <source>
    </source>
</evidence>
<evidence type="ECO:0000269" key="8">
    <source>
    </source>
</evidence>
<evidence type="ECO:0000269" key="9">
    <source>
    </source>
</evidence>
<evidence type="ECO:0000269" key="10">
    <source>
    </source>
</evidence>
<evidence type="ECO:0000269" key="11">
    <source>
    </source>
</evidence>
<evidence type="ECO:0000305" key="12"/>
<keyword id="KW-1003">Cell membrane</keyword>
<keyword id="KW-0472">Membrane</keyword>
<keyword id="KW-0552">Olfaction</keyword>
<keyword id="KW-0675">Receptor</keyword>
<keyword id="KW-1185">Reference proteome</keyword>
<keyword id="KW-0716">Sensory transduction</keyword>
<keyword id="KW-0807">Transducer</keyword>
<keyword id="KW-0812">Transmembrane</keyword>
<keyword id="KW-1133">Transmembrane helix</keyword>
<feature type="chain" id="PRO_0000174250" description="Odorant receptor 47a">
    <location>
        <begin position="1"/>
        <end position="385"/>
    </location>
</feature>
<feature type="topological domain" description="Cytoplasmic" evidence="2">
    <location>
        <begin position="1"/>
        <end position="33"/>
    </location>
</feature>
<feature type="transmembrane region" description="Helical; Name=1" evidence="2">
    <location>
        <begin position="34"/>
        <end position="54"/>
    </location>
</feature>
<feature type="topological domain" description="Extracellular" evidence="2">
    <location>
        <begin position="55"/>
        <end position="62"/>
    </location>
</feature>
<feature type="transmembrane region" description="Helical; Name=2" evidence="2">
    <location>
        <begin position="63"/>
        <end position="83"/>
    </location>
</feature>
<feature type="topological domain" description="Cytoplasmic" evidence="2">
    <location>
        <begin position="84"/>
        <end position="129"/>
    </location>
</feature>
<feature type="transmembrane region" description="Helical; Name=3" evidence="2">
    <location>
        <begin position="130"/>
        <end position="150"/>
    </location>
</feature>
<feature type="topological domain" description="Extracellular" evidence="2">
    <location>
        <begin position="151"/>
        <end position="175"/>
    </location>
</feature>
<feature type="transmembrane region" description="Helical; Name=4" evidence="2">
    <location>
        <begin position="176"/>
        <end position="196"/>
    </location>
</feature>
<feature type="topological domain" description="Cytoplasmic" evidence="2">
    <location>
        <begin position="197"/>
        <end position="255"/>
    </location>
</feature>
<feature type="transmembrane region" description="Helical; Name=5" evidence="2">
    <location>
        <begin position="256"/>
        <end position="276"/>
    </location>
</feature>
<feature type="topological domain" description="Extracellular" evidence="2">
    <location>
        <begin position="277"/>
        <end position="284"/>
    </location>
</feature>
<feature type="transmembrane region" description="Helical; Name=6" evidence="2">
    <location>
        <begin position="285"/>
        <end position="305"/>
    </location>
</feature>
<feature type="topological domain" description="Cytoplasmic" evidence="2">
    <location>
        <begin position="306"/>
        <end position="357"/>
    </location>
</feature>
<feature type="transmembrane region" description="Helical; Name=7" evidence="2">
    <location>
        <begin position="358"/>
        <end position="378"/>
    </location>
</feature>
<feature type="topological domain" description="Extracellular" evidence="2">
    <location>
        <begin position="379"/>
        <end position="385"/>
    </location>
</feature>
<proteinExistence type="evidence at protein level"/>
<sequence>MDSFLQVQKSTIALLGFDLFSENREMWKRPYRAMNVFSIAAIFPFILAAVLHNWKNVLLLADAMVALLITILGLFKFSMILYLRRDFKRLIDKFRLLMSNEAEQGEEYAEILNAANKQDQRMCTLFRTCFLLAWALNSVLPLVRMGLSYWLAGHAEPELPFPCLFPWNIHIIRNYVLSFIWSAFASTGVVLPAVSLDTIFCSFTSNLCAFFKIAQYKVVRFKGGSLKESQATLNKVFALYQTSLDMCNDLNQCYQPIICAQFFISSLQLCMLGYLFSITFAQTEGVYYASFIATIIIQAYIYCYCGENLKTESASFEWAIYDSPWHESLGAGGASTSICRSLLISMMRAHRGFRITGYFFEANMEAFSSIVRTAMSYITMLRSFS</sequence>
<gene>
    <name type="primary">Or47a</name>
    <name type="synonym">AN10</name>
    <name type="synonym">dor24</name>
    <name type="synonym">DOR47E.1</name>
    <name type="synonym">Or47E.1</name>
    <name type="ORF">CG13225</name>
</gene>
<protein>
    <recommendedName>
        <fullName>Odorant receptor 47a</fullName>
    </recommendedName>
</protein>
<name>OR47A_DROME</name>
<reference key="1">
    <citation type="journal article" date="1999" name="Cell">
        <title>A spatial map of olfactory receptor expression in the Drosophila antenna.</title>
        <authorList>
            <person name="Vosshall L.B."/>
            <person name="Amrein H."/>
            <person name="Morozov P.S."/>
            <person name="Rzhetsky A."/>
            <person name="Axel R."/>
        </authorList>
    </citation>
    <scope>NUCLEOTIDE SEQUENCE [MRNA]</scope>
    <source>
        <strain>Oregon-R</strain>
        <tissue>Antenna</tissue>
    </source>
</reference>
<reference key="2">
    <citation type="journal article" date="1999" name="Genomics">
        <title>Identification of candidate Drosophila olfactory receptors from genomic DNA sequence.</title>
        <authorList>
            <person name="Gao Q."/>
            <person name="Chess A."/>
        </authorList>
    </citation>
    <scope>NUCLEOTIDE SEQUENCE [GENOMIC DNA]</scope>
</reference>
<reference key="3">
    <citation type="journal article" date="2000" name="Science">
        <title>The genome sequence of Drosophila melanogaster.</title>
        <authorList>
            <person name="Adams M.D."/>
            <person name="Celniker S.E."/>
            <person name="Holt R.A."/>
            <person name="Evans C.A."/>
            <person name="Gocayne J.D."/>
            <person name="Amanatides P.G."/>
            <person name="Scherer S.E."/>
            <person name="Li P.W."/>
            <person name="Hoskins R.A."/>
            <person name="Galle R.F."/>
            <person name="George R.A."/>
            <person name="Lewis S.E."/>
            <person name="Richards S."/>
            <person name="Ashburner M."/>
            <person name="Henderson S.N."/>
            <person name="Sutton G.G."/>
            <person name="Wortman J.R."/>
            <person name="Yandell M.D."/>
            <person name="Zhang Q."/>
            <person name="Chen L.X."/>
            <person name="Brandon R.C."/>
            <person name="Rogers Y.-H.C."/>
            <person name="Blazej R.G."/>
            <person name="Champe M."/>
            <person name="Pfeiffer B.D."/>
            <person name="Wan K.H."/>
            <person name="Doyle C."/>
            <person name="Baxter E.G."/>
            <person name="Helt G."/>
            <person name="Nelson C.R."/>
            <person name="Miklos G.L.G."/>
            <person name="Abril J.F."/>
            <person name="Agbayani A."/>
            <person name="An H.-J."/>
            <person name="Andrews-Pfannkoch C."/>
            <person name="Baldwin D."/>
            <person name="Ballew R.M."/>
            <person name="Basu A."/>
            <person name="Baxendale J."/>
            <person name="Bayraktaroglu L."/>
            <person name="Beasley E.M."/>
            <person name="Beeson K.Y."/>
            <person name="Benos P.V."/>
            <person name="Berman B.P."/>
            <person name="Bhandari D."/>
            <person name="Bolshakov S."/>
            <person name="Borkova D."/>
            <person name="Botchan M.R."/>
            <person name="Bouck J."/>
            <person name="Brokstein P."/>
            <person name="Brottier P."/>
            <person name="Burtis K.C."/>
            <person name="Busam D.A."/>
            <person name="Butler H."/>
            <person name="Cadieu E."/>
            <person name="Center A."/>
            <person name="Chandra I."/>
            <person name="Cherry J.M."/>
            <person name="Cawley S."/>
            <person name="Dahlke C."/>
            <person name="Davenport L.B."/>
            <person name="Davies P."/>
            <person name="de Pablos B."/>
            <person name="Delcher A."/>
            <person name="Deng Z."/>
            <person name="Mays A.D."/>
            <person name="Dew I."/>
            <person name="Dietz S.M."/>
            <person name="Dodson K."/>
            <person name="Doup L.E."/>
            <person name="Downes M."/>
            <person name="Dugan-Rocha S."/>
            <person name="Dunkov B.C."/>
            <person name="Dunn P."/>
            <person name="Durbin K.J."/>
            <person name="Evangelista C.C."/>
            <person name="Ferraz C."/>
            <person name="Ferriera S."/>
            <person name="Fleischmann W."/>
            <person name="Fosler C."/>
            <person name="Gabrielian A.E."/>
            <person name="Garg N.S."/>
            <person name="Gelbart W.M."/>
            <person name="Glasser K."/>
            <person name="Glodek A."/>
            <person name="Gong F."/>
            <person name="Gorrell J.H."/>
            <person name="Gu Z."/>
            <person name="Guan P."/>
            <person name="Harris M."/>
            <person name="Harris N.L."/>
            <person name="Harvey D.A."/>
            <person name="Heiman T.J."/>
            <person name="Hernandez J.R."/>
            <person name="Houck J."/>
            <person name="Hostin D."/>
            <person name="Houston K.A."/>
            <person name="Howland T.J."/>
            <person name="Wei M.-H."/>
            <person name="Ibegwam C."/>
            <person name="Jalali M."/>
            <person name="Kalush F."/>
            <person name="Karpen G.H."/>
            <person name="Ke Z."/>
            <person name="Kennison J.A."/>
            <person name="Ketchum K.A."/>
            <person name="Kimmel B.E."/>
            <person name="Kodira C.D."/>
            <person name="Kraft C.L."/>
            <person name="Kravitz S."/>
            <person name="Kulp D."/>
            <person name="Lai Z."/>
            <person name="Lasko P."/>
            <person name="Lei Y."/>
            <person name="Levitsky A.A."/>
            <person name="Li J.H."/>
            <person name="Li Z."/>
            <person name="Liang Y."/>
            <person name="Lin X."/>
            <person name="Liu X."/>
            <person name="Mattei B."/>
            <person name="McIntosh T.C."/>
            <person name="McLeod M.P."/>
            <person name="McPherson D."/>
            <person name="Merkulov G."/>
            <person name="Milshina N.V."/>
            <person name="Mobarry C."/>
            <person name="Morris J."/>
            <person name="Moshrefi A."/>
            <person name="Mount S.M."/>
            <person name="Moy M."/>
            <person name="Murphy B."/>
            <person name="Murphy L."/>
            <person name="Muzny D.M."/>
            <person name="Nelson D.L."/>
            <person name="Nelson D.R."/>
            <person name="Nelson K.A."/>
            <person name="Nixon K."/>
            <person name="Nusskern D.R."/>
            <person name="Pacleb J.M."/>
            <person name="Palazzolo M."/>
            <person name="Pittman G.S."/>
            <person name="Pan S."/>
            <person name="Pollard J."/>
            <person name="Puri V."/>
            <person name="Reese M.G."/>
            <person name="Reinert K."/>
            <person name="Remington K."/>
            <person name="Saunders R.D.C."/>
            <person name="Scheeler F."/>
            <person name="Shen H."/>
            <person name="Shue B.C."/>
            <person name="Siden-Kiamos I."/>
            <person name="Simpson M."/>
            <person name="Skupski M.P."/>
            <person name="Smith T.J."/>
            <person name="Spier E."/>
            <person name="Spradling A.C."/>
            <person name="Stapleton M."/>
            <person name="Strong R."/>
            <person name="Sun E."/>
            <person name="Svirskas R."/>
            <person name="Tector C."/>
            <person name="Turner R."/>
            <person name="Venter E."/>
            <person name="Wang A.H."/>
            <person name="Wang X."/>
            <person name="Wang Z.-Y."/>
            <person name="Wassarman D.A."/>
            <person name="Weinstock G.M."/>
            <person name="Weissenbach J."/>
            <person name="Williams S.M."/>
            <person name="Woodage T."/>
            <person name="Worley K.C."/>
            <person name="Wu D."/>
            <person name="Yang S."/>
            <person name="Yao Q.A."/>
            <person name="Ye J."/>
            <person name="Yeh R.-F."/>
            <person name="Zaveri J.S."/>
            <person name="Zhan M."/>
            <person name="Zhang G."/>
            <person name="Zhao Q."/>
            <person name="Zheng L."/>
            <person name="Zheng X.H."/>
            <person name="Zhong F.N."/>
            <person name="Zhong W."/>
            <person name="Zhou X."/>
            <person name="Zhu S.C."/>
            <person name="Zhu X."/>
            <person name="Smith H.O."/>
            <person name="Gibbs R.A."/>
            <person name="Myers E.W."/>
            <person name="Rubin G.M."/>
            <person name="Venter J.C."/>
        </authorList>
    </citation>
    <scope>NUCLEOTIDE SEQUENCE [LARGE SCALE GENOMIC DNA]</scope>
    <source>
        <strain>Berkeley</strain>
    </source>
</reference>
<reference key="4">
    <citation type="journal article" date="2002" name="Genome Biol.">
        <title>Annotation of the Drosophila melanogaster euchromatic genome: a systematic review.</title>
        <authorList>
            <person name="Misra S."/>
            <person name="Crosby M.A."/>
            <person name="Mungall C.J."/>
            <person name="Matthews B.B."/>
            <person name="Campbell K.S."/>
            <person name="Hradecky P."/>
            <person name="Huang Y."/>
            <person name="Kaminker J.S."/>
            <person name="Millburn G.H."/>
            <person name="Prochnik S.E."/>
            <person name="Smith C.D."/>
            <person name="Tupy J.L."/>
            <person name="Whitfield E.J."/>
            <person name="Bayraktaroglu L."/>
            <person name="Berman B.P."/>
            <person name="Bettencourt B.R."/>
            <person name="Celniker S.E."/>
            <person name="de Grey A.D.N.J."/>
            <person name="Drysdale R.A."/>
            <person name="Harris N.L."/>
            <person name="Richter J."/>
            <person name="Russo S."/>
            <person name="Schroeder A.J."/>
            <person name="Shu S.Q."/>
            <person name="Stapleton M."/>
            <person name="Yamada C."/>
            <person name="Ashburner M."/>
            <person name="Gelbart W.M."/>
            <person name="Rubin G.M."/>
            <person name="Lewis S.E."/>
        </authorList>
    </citation>
    <scope>GENOME REANNOTATION</scope>
    <source>
        <strain>Berkeley</strain>
    </source>
</reference>
<reference key="5">
    <citation type="journal article" date="1999" name="Neuron">
        <title>A novel family of divergent seven-transmembrane proteins: candidate odorant receptors in Drosophila.</title>
        <authorList>
            <person name="Clyne P.J."/>
            <person name="Warr C.G."/>
            <person name="Freeman M.R."/>
            <person name="Lessing D."/>
            <person name="Kim J."/>
            <person name="Carlson J.R."/>
        </authorList>
    </citation>
    <scope>IDENTIFICATION</scope>
    <scope>TISSUE SPECIFICITY</scope>
</reference>
<reference key="6">
    <citation type="journal article" date="2000" name="Cell">
        <title>An olfactory sensory map in the fly brain.</title>
        <authorList>
            <person name="Vosshall L.B."/>
            <person name="Wong A.M."/>
            <person name="Axel R."/>
        </authorList>
    </citation>
    <scope>TISSUE SPECIFICITY</scope>
</reference>
<reference key="7">
    <citation type="journal article" date="2006" name="Cell">
        <title>Coding of odors by a receptor repertoire.</title>
        <authorList>
            <person name="Hallem E.A."/>
            <person name="Carlson J.R."/>
        </authorList>
    </citation>
    <scope>FUNCTION</scope>
</reference>
<reference key="8">
    <citation type="journal article" date="2006" name="PLoS Biol.">
        <title>Atypical membrane topology and heteromeric function of Drosophila odorant receptors in vivo.</title>
        <authorList>
            <person name="Benton R."/>
            <person name="Sachse S."/>
            <person name="Michnick S.W."/>
            <person name="Vosshall L.B."/>
        </authorList>
    </citation>
    <scope>FUNCTION</scope>
    <scope>INTERACTION WITH ORCO</scope>
    <scope>TISSUE SPECIFICITY</scope>
</reference>
<reference key="9">
    <citation type="journal article" date="2008" name="Nature">
        <title>Insect olfactory receptors are heteromeric ligand-gated ion channels.</title>
        <authorList>
            <person name="Sato K."/>
            <person name="Pellegrino M."/>
            <person name="Nakagawa T."/>
            <person name="Nakagawa T."/>
            <person name="Vosshall L.B."/>
            <person name="Touhara K."/>
        </authorList>
    </citation>
    <scope>FUNCTION</scope>
    <scope>INTERACTION WITH ORCO</scope>
</reference>
<reference key="10">
    <citation type="journal article" date="2008" name="Nature">
        <title>Drosophila odorant receptors are both ligand-gated and cyclic-nucleotide-activated cation channels.</title>
        <authorList>
            <person name="Wicher D."/>
            <person name="Schaefer R."/>
            <person name="Bauernfeind R."/>
            <person name="Stensmyr M.C."/>
            <person name="Heller R."/>
            <person name="Heinemann S.H."/>
            <person name="Hansson B.S."/>
        </authorList>
    </citation>
    <scope>FUNCTION</scope>
    <scope>INTERACTION WITH ORCO</scope>
</reference>
<reference key="11">
    <citation type="journal article" date="2011" name="J. Neurosci.">
        <title>Similar odorants elicit different behavioral and physiological responses, some supersustained.</title>
        <authorList>
            <person name="Montague S.A."/>
            <person name="Mathew D."/>
            <person name="Carlson J.R."/>
        </authorList>
    </citation>
    <scope>FUNCTION</scope>
</reference>
<reference key="12">
    <citation type="journal article" date="2011" name="PLoS ONE">
        <title>Modeling peripheral olfactory coding in Drosophila larvae.</title>
        <authorList>
            <person name="Hoare D.J."/>
            <person name="Humble J."/>
            <person name="Jin D."/>
            <person name="Gilding N."/>
            <person name="Petersen R."/>
            <person name="Cobb M."/>
            <person name="McCrohan C."/>
        </authorList>
    </citation>
    <scope>FUNCTION</scope>
</reference>
<reference key="13">
    <citation type="journal article" date="2012" name="Chem. Senses">
        <title>Genetic variation in odorant receptors contributes to variation in olfactory behavior in a natural population of Drosophila melanogaster.</title>
        <authorList>
            <person name="Richgels P.K."/>
            <person name="Rollmann S.M."/>
        </authorList>
    </citation>
    <scope>FUNCTION</scope>
</reference>